<reference key="1">
    <citation type="journal article" date="2005" name="BMC Genomics">
        <title>Characterization of 954 bovine full-CDS cDNA sequences.</title>
        <authorList>
            <person name="Harhay G.P."/>
            <person name="Sonstegard T.S."/>
            <person name="Keele J.W."/>
            <person name="Heaton M.P."/>
            <person name="Clawson M.L."/>
            <person name="Snelling W.M."/>
            <person name="Wiedmann R.T."/>
            <person name="Van Tassell C.P."/>
            <person name="Smith T.P.L."/>
        </authorList>
    </citation>
    <scope>NUCLEOTIDE SEQUENCE [LARGE SCALE MRNA] (ISOFORM 2)</scope>
</reference>
<reference key="2">
    <citation type="submission" date="2006-09" db="EMBL/GenBank/DDBJ databases">
        <authorList>
            <consortium name="NIH - Mammalian Gene Collection (MGC) project"/>
        </authorList>
    </citation>
    <scope>NUCLEOTIDE SEQUENCE [LARGE SCALE MRNA] (ISOFORM 1)</scope>
    <source>
        <strain>Hereford</strain>
        <tissue>Fetal skin</tissue>
    </source>
</reference>
<protein>
    <recommendedName>
        <fullName>Glycerol kinase 5</fullName>
        <shortName>GK 5</shortName>
        <shortName>Glycerokinase 5</shortName>
        <ecNumber evidence="2">2.7.1.30</ecNumber>
    </recommendedName>
    <alternativeName>
        <fullName>ATP:glycerol 3-phosphotransferase 5</fullName>
    </alternativeName>
</protein>
<feature type="chain" id="PRO_0000323753" description="Glycerol kinase 5">
    <location>
        <begin position="1"/>
        <end position="528"/>
    </location>
</feature>
<feature type="binding site" evidence="1">
    <location>
        <position position="28"/>
    </location>
    <ligand>
        <name>ATP</name>
        <dbReference type="ChEBI" id="CHEBI:30616"/>
    </ligand>
</feature>
<feature type="binding site" evidence="1">
    <location>
        <position position="29"/>
    </location>
    <ligand>
        <name>ATP</name>
        <dbReference type="ChEBI" id="CHEBI:30616"/>
    </ligand>
</feature>
<feature type="binding site" evidence="1">
    <location>
        <position position="98"/>
    </location>
    <ligand>
        <name>glycerol</name>
        <dbReference type="ChEBI" id="CHEBI:17754"/>
    </ligand>
</feature>
<feature type="binding site" evidence="1">
    <location>
        <position position="275"/>
    </location>
    <ligand>
        <name>glycerol</name>
        <dbReference type="ChEBI" id="CHEBI:17754"/>
    </ligand>
</feature>
<feature type="binding site" evidence="1">
    <location>
        <position position="276"/>
    </location>
    <ligand>
        <name>glycerol</name>
        <dbReference type="ChEBI" id="CHEBI:17754"/>
    </ligand>
</feature>
<feature type="binding site" evidence="1">
    <location>
        <position position="297"/>
    </location>
    <ligand>
        <name>ATP</name>
        <dbReference type="ChEBI" id="CHEBI:30616"/>
    </ligand>
</feature>
<feature type="binding site" evidence="1">
    <location>
        <position position="340"/>
    </location>
    <ligand>
        <name>ATP</name>
        <dbReference type="ChEBI" id="CHEBI:30616"/>
    </ligand>
</feature>
<feature type="binding site" evidence="1">
    <location>
        <position position="440"/>
    </location>
    <ligand>
        <name>ATP</name>
        <dbReference type="ChEBI" id="CHEBI:30616"/>
    </ligand>
</feature>
<feature type="splice variant" id="VSP_032119" description="In isoform 2." evidence="3">
    <original>DLFTDAAETEKMAQSLEDSEGVYFVPSFSGLQAPLNDPCACASFMGLKPSTNKYHLVRAI</original>
    <variation>GRMKKHSKNKNKGIISPLSVL</variation>
    <location>
        <begin position="350"/>
        <end position="409"/>
    </location>
</feature>
<feature type="splice variant" id="VSP_032120" description="In isoform 2." evidence="3">
    <location>
        <begin position="410"/>
        <end position="528"/>
    </location>
</feature>
<proteinExistence type="evidence at transcript level"/>
<gene>
    <name type="primary">GK5</name>
</gene>
<organism>
    <name type="scientific">Bos taurus</name>
    <name type="common">Bovine</name>
    <dbReference type="NCBI Taxonomy" id="9913"/>
    <lineage>
        <taxon>Eukaryota</taxon>
        <taxon>Metazoa</taxon>
        <taxon>Chordata</taxon>
        <taxon>Craniata</taxon>
        <taxon>Vertebrata</taxon>
        <taxon>Euteleostomi</taxon>
        <taxon>Mammalia</taxon>
        <taxon>Eutheria</taxon>
        <taxon>Laurasiatheria</taxon>
        <taxon>Artiodactyla</taxon>
        <taxon>Ruminantia</taxon>
        <taxon>Pecora</taxon>
        <taxon>Bovidae</taxon>
        <taxon>Bovinae</taxon>
        <taxon>Bos</taxon>
    </lineage>
</organism>
<sequence>MSEQSTVPEQSASDSRRAGFVLGVDVGSSMIRCHVYDRAARICGSSAQKVESLYPQPGWVEIDPDVLWLQFVAVIKESVKAAGIETNQIVGLGISTQRATFITWDKKTGKHFHNFISWQDLRATELVKSWNGSLLMKLIHSSCRVLHFFTRSKQFLAASLFTFTTQHVSLRLAWILQNLTEVQKAVEEENCCFGTVDTWLLHKLTKGSEFATDFSNASTTGLFDPYEMCWSKIVTSLLSIPLSLLPPVKDTSHNFGSVDEEIFGVPIPIVALVADQQAAMFGECCFQTGDVKLTMGTGTFLDINTGNNPQQSVGGFYPLIGWKIGQEVVCLAESNAGDTGTAIEWAQQLDLFTDAAETEKMAQSLEDSEGVYFVPSFSGLQAPLNDPCACASFMGLKPSTNKYHLVRAILESIAFRNKQLYETMQKEIHIPVRKIRADGGVCKNSFVMQMTSDLINETIDRPVHIDMSCSGAASLAGLAVGFWSDKEELKKLRQSEMVFKPQKKWQEYEVNMGNWVKAVKRSMNWYKT</sequence>
<keyword id="KW-0025">Alternative splicing</keyword>
<keyword id="KW-0067">ATP-binding</keyword>
<keyword id="KW-0963">Cytoplasm</keyword>
<keyword id="KW-0319">Glycerol metabolism</keyword>
<keyword id="KW-0418">Kinase</keyword>
<keyword id="KW-0547">Nucleotide-binding</keyword>
<keyword id="KW-1185">Reference proteome</keyword>
<keyword id="KW-0808">Transferase</keyword>
<dbReference type="EC" id="2.7.1.30" evidence="2"/>
<dbReference type="EMBL" id="BT021588">
    <property type="protein sequence ID" value="AAX46435.1"/>
    <property type="molecule type" value="mRNA"/>
</dbReference>
<dbReference type="EMBL" id="BC123888">
    <property type="protein sequence ID" value="AAI23889.1"/>
    <property type="molecule type" value="mRNA"/>
</dbReference>
<dbReference type="RefSeq" id="NP_001030550.2">
    <molecule id="Q08D86-1"/>
    <property type="nucleotide sequence ID" value="NM_001035473.2"/>
</dbReference>
<dbReference type="SMR" id="Q08D86"/>
<dbReference type="FunCoup" id="Q08D86">
    <property type="interactions" value="288"/>
</dbReference>
<dbReference type="STRING" id="9913.ENSBTAP00000024143"/>
<dbReference type="PaxDb" id="9913-ENSBTAP00000024143"/>
<dbReference type="Ensembl" id="ENSBTAT00000024143.6">
    <molecule id="Q08D86-1"/>
    <property type="protein sequence ID" value="ENSBTAP00000024143.6"/>
    <property type="gene ID" value="ENSBTAG00000018138.7"/>
</dbReference>
<dbReference type="Ensembl" id="ENSBTAT00000034692.4">
    <molecule id="Q08D86-2"/>
    <property type="protein sequence ID" value="ENSBTAP00000034578.4"/>
    <property type="gene ID" value="ENSBTAG00000018138.7"/>
</dbReference>
<dbReference type="GeneID" id="616031"/>
<dbReference type="KEGG" id="bta:616031"/>
<dbReference type="CTD" id="256356"/>
<dbReference type="VEuPathDB" id="HostDB:ENSBTAG00000018138"/>
<dbReference type="eggNOG" id="KOG2517">
    <property type="taxonomic scope" value="Eukaryota"/>
</dbReference>
<dbReference type="GeneTree" id="ENSGT01000000214434"/>
<dbReference type="InParanoid" id="Q08D86"/>
<dbReference type="OMA" id="ECCFEPG"/>
<dbReference type="OrthoDB" id="6278781at2759"/>
<dbReference type="UniPathway" id="UPA00618">
    <property type="reaction ID" value="UER00672"/>
</dbReference>
<dbReference type="Proteomes" id="UP000009136">
    <property type="component" value="Chromosome 1"/>
</dbReference>
<dbReference type="Bgee" id="ENSBTAG00000018138">
    <property type="expression patterns" value="Expressed in liver and 111 other cell types or tissues"/>
</dbReference>
<dbReference type="GO" id="GO:0005737">
    <property type="term" value="C:cytoplasm"/>
    <property type="evidence" value="ECO:0000250"/>
    <property type="project" value="UniProtKB"/>
</dbReference>
<dbReference type="GO" id="GO:0005739">
    <property type="term" value="C:mitochondrion"/>
    <property type="evidence" value="ECO:0000318"/>
    <property type="project" value="GO_Central"/>
</dbReference>
<dbReference type="GO" id="GO:0005524">
    <property type="term" value="F:ATP binding"/>
    <property type="evidence" value="ECO:0007669"/>
    <property type="project" value="UniProtKB-KW"/>
</dbReference>
<dbReference type="GO" id="GO:0004370">
    <property type="term" value="F:glycerol kinase activity"/>
    <property type="evidence" value="ECO:0000250"/>
    <property type="project" value="UniProtKB"/>
</dbReference>
<dbReference type="GO" id="GO:0019563">
    <property type="term" value="P:glycerol catabolic process"/>
    <property type="evidence" value="ECO:0007669"/>
    <property type="project" value="UniProtKB-UniPathway"/>
</dbReference>
<dbReference type="GO" id="GO:0006071">
    <property type="term" value="P:glycerol metabolic process"/>
    <property type="evidence" value="ECO:0000318"/>
    <property type="project" value="GO_Central"/>
</dbReference>
<dbReference type="GO" id="GO:0046167">
    <property type="term" value="P:glycerol-3-phosphate biosynthetic process"/>
    <property type="evidence" value="ECO:0000250"/>
    <property type="project" value="UniProtKB"/>
</dbReference>
<dbReference type="GO" id="GO:0006641">
    <property type="term" value="P:triglyceride metabolic process"/>
    <property type="evidence" value="ECO:0000318"/>
    <property type="project" value="GO_Central"/>
</dbReference>
<dbReference type="CDD" id="cd07793">
    <property type="entry name" value="ASKHA_NBD_FGGY_GK5-like"/>
    <property type="match status" value="1"/>
</dbReference>
<dbReference type="FunFam" id="3.30.420.40:FF:000102">
    <property type="entry name" value="Putative glycerol kinase 5"/>
    <property type="match status" value="1"/>
</dbReference>
<dbReference type="FunFam" id="3.30.420.40:FF:000104">
    <property type="entry name" value="putative glycerol kinase 5"/>
    <property type="match status" value="1"/>
</dbReference>
<dbReference type="Gene3D" id="3.30.420.40">
    <property type="match status" value="2"/>
</dbReference>
<dbReference type="InterPro" id="IPR043129">
    <property type="entry name" value="ATPase_NBD"/>
</dbReference>
<dbReference type="InterPro" id="IPR000577">
    <property type="entry name" value="Carb_kinase_FGGY"/>
</dbReference>
<dbReference type="InterPro" id="IPR018483">
    <property type="entry name" value="Carb_kinase_FGGY_CS"/>
</dbReference>
<dbReference type="InterPro" id="IPR018485">
    <property type="entry name" value="FGGY_C"/>
</dbReference>
<dbReference type="InterPro" id="IPR018484">
    <property type="entry name" value="FGGY_N"/>
</dbReference>
<dbReference type="InterPro" id="IPR037444">
    <property type="entry name" value="GK5"/>
</dbReference>
<dbReference type="PANTHER" id="PTHR10196:SF68">
    <property type="entry name" value="GLYCEROL KINASE 5-RELATED"/>
    <property type="match status" value="1"/>
</dbReference>
<dbReference type="PANTHER" id="PTHR10196">
    <property type="entry name" value="SUGAR KINASE"/>
    <property type="match status" value="1"/>
</dbReference>
<dbReference type="Pfam" id="PF02782">
    <property type="entry name" value="FGGY_C"/>
    <property type="match status" value="1"/>
</dbReference>
<dbReference type="Pfam" id="PF00370">
    <property type="entry name" value="FGGY_N"/>
    <property type="match status" value="1"/>
</dbReference>
<dbReference type="PIRSF" id="PIRSF000538">
    <property type="entry name" value="GlpK"/>
    <property type="match status" value="1"/>
</dbReference>
<dbReference type="SUPFAM" id="SSF53067">
    <property type="entry name" value="Actin-like ATPase domain"/>
    <property type="match status" value="2"/>
</dbReference>
<dbReference type="PROSITE" id="PS00445">
    <property type="entry name" value="FGGY_KINASES_2"/>
    <property type="match status" value="1"/>
</dbReference>
<evidence type="ECO:0000250" key="1">
    <source>
        <dbReference type="UniProtKB" id="P0A6F3"/>
    </source>
</evidence>
<evidence type="ECO:0000250" key="2">
    <source>
        <dbReference type="UniProtKB" id="Q8BX05"/>
    </source>
</evidence>
<evidence type="ECO:0000303" key="3">
    <source>
    </source>
</evidence>
<evidence type="ECO:0000305" key="4"/>
<comment type="function">
    <text evidence="2">Skin-specific kinase that plays a key role in glycerol metabolism, catalyzing its phosphorylation to produce sn-glycerol 3-phosphate. Involved in skin-specific regulation of sterol regulatory element-binding protein (SREBP) processing and lipid biosynthesis.</text>
</comment>
<comment type="catalytic activity">
    <reaction evidence="2">
        <text>glycerol + ATP = sn-glycerol 3-phosphate + ADP + H(+)</text>
        <dbReference type="Rhea" id="RHEA:21644"/>
        <dbReference type="ChEBI" id="CHEBI:15378"/>
        <dbReference type="ChEBI" id="CHEBI:17754"/>
        <dbReference type="ChEBI" id="CHEBI:30616"/>
        <dbReference type="ChEBI" id="CHEBI:57597"/>
        <dbReference type="ChEBI" id="CHEBI:456216"/>
        <dbReference type="EC" id="2.7.1.30"/>
    </reaction>
    <physiologicalReaction direction="left-to-right" evidence="2">
        <dbReference type="Rhea" id="RHEA:21645"/>
    </physiologicalReaction>
</comment>
<comment type="pathway">
    <text evidence="2">Polyol metabolism; glycerol degradation via glycerol kinase pathway; sn-glycerol 3-phosphate from glycerol: step 1/1.</text>
</comment>
<comment type="subcellular location">
    <subcellularLocation>
        <location evidence="2">Cytoplasm</location>
    </subcellularLocation>
</comment>
<comment type="alternative products">
    <event type="alternative splicing"/>
    <isoform>
        <id>Q08D86-1</id>
        <name>1</name>
        <sequence type="displayed"/>
    </isoform>
    <isoform>
        <id>Q08D86-2</id>
        <name>2</name>
        <sequence type="described" ref="VSP_032119 VSP_032120"/>
    </isoform>
</comment>
<comment type="similarity">
    <text evidence="4">Belongs to the FGGY kinase family.</text>
</comment>
<name>GLPK5_BOVIN</name>
<accession>Q08D86</accession>
<accession>Q58DK9</accession>